<comment type="function">
    <text evidence="4 5 6 7 8 9 10">Unconventional myosin that functions as actin-based motor protein with ATPase activity (PubMed:30467170). Binds to membranes enriched in phosphatidylinositol 4-5-bisphosphate, and can glide along actin filaments when anchored to a lipid bilayer (PubMed:30467170). Generates left-right asymmetry at the level of single cells, organs and the whole body via its interaction with the actin cytoskeleton, both in the embryo and the adult (PubMed:16598258, PubMed:16598259, PubMed:18521948, PubMed:25659376, PubMed:26073018, PubMed:30467170). Normal left-right asymmetry of the larval midgut and hindgut requires expression in the embryonic hindgut epithelium during a critical time period, 10 to 12.75 hours after egg laying (PubMed:18521948). This period corresponds to a late stage of germband retraction, and precedes left-right asymmetric morphogenesis (PubMed:18521948). Expression in segment H1 of the imaginal ring is required at 0 to 24 hours after pupation for changes of cell shape and orientation in the H2 segment, which then gives rise to normal, dextral looping of the adult hindgut (PubMed:16598258, PubMed:26073018). Required during a critical period, 126-132 hours after egg laying, for normal, dextral rotation of the adult male genitalia (PubMed:16598258, PubMed:16598259, PubMed:22491943, PubMed:25659376, PubMed:26073018). Has a double role by promoting dextral rotation in the posterior compartment of segment A8 of the male genital disk, and in repressing sinistral looping in the anterior compartment (PubMed:16598259).</text>
</comment>
<comment type="subunit">
    <text evidence="5 7 9 11">Binds to F-actin (PubMed:7589814). Interacts with arm (PubMed:16598259, PubMed:22491943). Interacts with shg (PubMed:22491943). Interacts with ds (via intracellular region) (PubMed:26073018).</text>
</comment>
<comment type="subcellular location">
    <subcellularLocation>
        <location evidence="4 7 11">Cytoplasm</location>
    </subcellularLocation>
    <subcellularLocation>
        <location evidence="4 7 8 11">Cytoplasm</location>
        <location evidence="4 7 8 11">Cell cortex</location>
    </subcellularLocation>
    <subcellularLocation>
        <location evidence="4 5 11">Cytoplasm</location>
        <location evidence="4 5 11">Cytoskeleton</location>
    </subcellularLocation>
    <subcellularLocation>
        <location evidence="9 10">Cell membrane</location>
        <topology evidence="9 10">Peripheral membrane protein</topology>
        <orientation>Cytoplasmic side</orientation>
    </subcellularLocation>
    <subcellularLocation>
        <location evidence="9">Cell junction</location>
    </subcellularLocation>
    <subcellularLocation>
        <location evidence="5">Cell junction</location>
        <location evidence="5">Adherens junction</location>
    </subcellularLocation>
    <subcellularLocation>
        <location evidence="4">Cell projection</location>
    </subcellularLocation>
    <text evidence="4 5 8 9 11">Detected throughout the cytoplasm. Detected primarily in the basolateral cytoplasmic region of immature enterocytes. Detected also in the apical cytoplasmic region in midgut enterocytes and follicle cells (PubMed:7589814). Colocalizes with the actin cytoskeleton (PubMed:16598258, PubMed:16598259, PubMed:25659376, PubMed:7589814). Colocalizes with arm at adherens junctions (PubMed:16598259). Colocalizes with ds at cell junctions (PubMed:26073018).</text>
</comment>
<comment type="tissue specificity">
    <text evidence="11">In the embryo, expressed in gastric caeca, midgut cells of the proventriculus, and in the mid and hindgut. In the larval gut brush border, expression is in the terminal web domain. In the adult gut brush border, expression remains in the web domain and has also moved into the microvilli. Also expressed at low levels in follicle cells during oogenesis.</text>
</comment>
<comment type="developmental stage">
    <text evidence="4 5 7 8 9 11 12">Expressed both maternally and zygotically throughout development to adulthood with highest levels at the end of larval development. Expression in embryogenesis is correlated with the formation of a brush border within the alimentary canal. Detected in the developing hindgut and midgut in stage 12 and stage 14 embryos (at protein level) (PubMed:16598258). In third instar larvae, detected in a symmetrical, double chevron-like pattern in the ventral section of segment A8 of the male genital disk, with one chevron in the anterior and the other in the posterior part of this segment (PubMed:16598259, PubMed:22491943). Detected in the H1 domain of the larval imaginal disk (PubMed:26073018). Detected in embryonic anterior and posterior midgut, hindgut, and in salivary gland (PubMed:25659376).</text>
</comment>
<comment type="domain">
    <text evidence="10">The myosin motor domain contains the derminants for dextral twisting.</text>
</comment>
<comment type="domain">
    <text evidence="5 6">The two IQ domains are essential for activity in determining left-right asymmetry.</text>
</comment>
<comment type="domain">
    <text evidence="6">The actin-binding domain is essential for activity in determining left-right asymmetry.</text>
</comment>
<comment type="disruption phenotype">
    <text evidence="4 5 6 9">Viable and fertile (PubMed:16598258). Mutant embryos and adults display normal foregut left-right asymmetry, but inverted left-right asymmetry of the midgut and hindgut (PubMed:16598258, PubMed:18521948). RNAi-mediated knockdown in the hindgut at 0 to 24 hours after pupation leads to inverted left-right asymmetry of the adult hindgut, but knockdown at later stages has little or no effect (PubMed:16598258, PubMed:26073018). Adults display inverted left-right asymmetry of the male genitalia (PubMed:16598258). RNAi-mediated knockdown in the anterior and the posterior part of segment A8 of the male genital disk causes loss of the normal dextral rotation of the genital plate and inverted, sinistral spermiduct looping (PubMed:16598259, PubMed:26073018). Selective RNAi-mediated down-regulation in the anterior part of segment A8 of the male genital disk leads to partial dextral rotation of the genitalia, while RNAi-mediated down-regulation in the posterior part of segment A8 leads to non-rotated genitalia (PubMed:16598259). Combined RNAi-mediated knockdown of both ds and Myo31DF in the H1 segment of the imaginal ring causes mislooping of the adult hindgut (PubMed:26073018).</text>
</comment>
<comment type="miscellaneous">
    <text evidence="4 10">Overexpression throughout the embryo reverses the normal left-right asymmetry of the embryonic gut, giving rise to a gut that is a mirror-image of the wild-type (PubMed:16598258). Ectopic expression in the larval epidermis causes dextral twisting of the entire larval body. Ectopic expression in tracheal precursor cells causes dextral spiraling of tracheal branches, giving rise to a spiraling ribbon shape instead of the normal smooth tube. Ectopic expression in epithelial cells causes increased elongation and a clear shift of the membrane orientation toward one side, so that the membrane is no longer perpendicular to the anterior-posterior axis (PubMed:30467170).</text>
</comment>
<comment type="similarity">
    <text evidence="19">Belongs to the TRAFAC class myosin-kinesin ATPase superfamily. Myosin family.</text>
</comment>
<comment type="caution">
    <text evidence="19">Represents an unconventional myosin that should not be confused with the conventional myosin-1.</text>
</comment>
<name>MY31D_DROME</name>
<evidence type="ECO:0000255" key="1">
    <source>
        <dbReference type="PROSITE-ProRule" id="PRU00116"/>
    </source>
</evidence>
<evidence type="ECO:0000255" key="2">
    <source>
        <dbReference type="PROSITE-ProRule" id="PRU00782"/>
    </source>
</evidence>
<evidence type="ECO:0000255" key="3">
    <source>
        <dbReference type="PROSITE-ProRule" id="PRU01093"/>
    </source>
</evidence>
<evidence type="ECO:0000269" key="4">
    <source>
    </source>
</evidence>
<evidence type="ECO:0000269" key="5">
    <source>
    </source>
</evidence>
<evidence type="ECO:0000269" key="6">
    <source>
    </source>
</evidence>
<evidence type="ECO:0000269" key="7">
    <source>
    </source>
</evidence>
<evidence type="ECO:0000269" key="8">
    <source>
    </source>
</evidence>
<evidence type="ECO:0000269" key="9">
    <source>
    </source>
</evidence>
<evidence type="ECO:0000269" key="10">
    <source>
    </source>
</evidence>
<evidence type="ECO:0000269" key="11">
    <source>
    </source>
</evidence>
<evidence type="ECO:0000269" key="12">
    <source>
    </source>
</evidence>
<evidence type="ECO:0000303" key="13">
    <source>
    </source>
</evidence>
<evidence type="ECO:0000303" key="14">
    <source>
    </source>
</evidence>
<evidence type="ECO:0000303" key="15">
    <source>
    </source>
</evidence>
<evidence type="ECO:0000303" key="16">
    <source>
    </source>
</evidence>
<evidence type="ECO:0000303" key="17">
    <source>
    </source>
</evidence>
<evidence type="ECO:0000303" key="18">
    <source>
    </source>
</evidence>
<evidence type="ECO:0000305" key="19"/>
<gene>
    <name evidence="14" type="primary">Myo31DF</name>
    <name evidence="16" type="synonym">Myo1D</name>
    <name type="ORF">CG7438</name>
</gene>
<dbReference type="EMBL" id="U07595">
    <property type="protein sequence ID" value="AAA19590.1"/>
    <property type="molecule type" value="mRNA"/>
</dbReference>
<dbReference type="EMBL" id="AE014134">
    <property type="protein sequence ID" value="AAF52966.1"/>
    <property type="molecule type" value="Genomic_DNA"/>
</dbReference>
<dbReference type="EMBL" id="AE014134">
    <property type="protein sequence ID" value="ADV37034.1"/>
    <property type="molecule type" value="Genomic_DNA"/>
</dbReference>
<dbReference type="EMBL" id="AE014134">
    <property type="protein sequence ID" value="AAN10756.1"/>
    <property type="molecule type" value="Genomic_DNA"/>
</dbReference>
<dbReference type="EMBL" id="AY075567">
    <property type="protein sequence ID" value="AAL68374.1"/>
    <property type="molecule type" value="mRNA"/>
</dbReference>
<dbReference type="PIR" id="S45573">
    <property type="entry name" value="S45573"/>
</dbReference>
<dbReference type="RefSeq" id="NP_001188784.1">
    <property type="nucleotide sequence ID" value="NM_001201855.2"/>
</dbReference>
<dbReference type="RefSeq" id="NP_523538.1">
    <property type="nucleotide sequence ID" value="NM_078814.4"/>
</dbReference>
<dbReference type="RefSeq" id="NP_723596.1">
    <property type="nucleotide sequence ID" value="NM_164933.3"/>
</dbReference>
<dbReference type="SMR" id="Q23978"/>
<dbReference type="BioGRID" id="60525">
    <property type="interactions" value="14"/>
</dbReference>
<dbReference type="FunCoup" id="Q23978">
    <property type="interactions" value="702"/>
</dbReference>
<dbReference type="IntAct" id="Q23978">
    <property type="interactions" value="45"/>
</dbReference>
<dbReference type="STRING" id="7227.FBpp0079626"/>
<dbReference type="PaxDb" id="7227-FBpp0079625"/>
<dbReference type="DNASU" id="34445"/>
<dbReference type="EnsemblMetazoa" id="FBtr0080035">
    <property type="protein sequence ID" value="FBpp0079625"/>
    <property type="gene ID" value="FBgn0086347"/>
</dbReference>
<dbReference type="EnsemblMetazoa" id="FBtr0080036">
    <property type="protein sequence ID" value="FBpp0079626"/>
    <property type="gene ID" value="FBgn0086347"/>
</dbReference>
<dbReference type="EnsemblMetazoa" id="FBtr0304138">
    <property type="protein sequence ID" value="FBpp0293078"/>
    <property type="gene ID" value="FBgn0086347"/>
</dbReference>
<dbReference type="GeneID" id="34445"/>
<dbReference type="KEGG" id="dme:Dmel_CG7438"/>
<dbReference type="AGR" id="FB:FBgn0086347"/>
<dbReference type="CTD" id="34445"/>
<dbReference type="FlyBase" id="FBgn0086347">
    <property type="gene designation" value="Myo31DF"/>
</dbReference>
<dbReference type="VEuPathDB" id="VectorBase:FBgn0086347"/>
<dbReference type="eggNOG" id="KOG0164">
    <property type="taxonomic scope" value="Eukaryota"/>
</dbReference>
<dbReference type="GeneTree" id="ENSGT00940000158053"/>
<dbReference type="HOGENOM" id="CLU_000192_7_7_1"/>
<dbReference type="InParanoid" id="Q23978"/>
<dbReference type="OMA" id="MTYGDIG"/>
<dbReference type="OrthoDB" id="6108017at2759"/>
<dbReference type="PhylomeDB" id="Q23978"/>
<dbReference type="SignaLink" id="Q23978"/>
<dbReference type="BioGRID-ORCS" id="34445">
    <property type="hits" value="0 hits in 3 CRISPR screens"/>
</dbReference>
<dbReference type="GenomeRNAi" id="34445"/>
<dbReference type="PRO" id="PR:Q23978"/>
<dbReference type="Proteomes" id="UP000000803">
    <property type="component" value="Chromosome 2L"/>
</dbReference>
<dbReference type="Bgee" id="FBgn0086347">
    <property type="expression patterns" value="Expressed in embryonic/larval hemocyte (Drosophila) and 179 other cell types or tissues"/>
</dbReference>
<dbReference type="GO" id="GO:0015629">
    <property type="term" value="C:actin cytoskeleton"/>
    <property type="evidence" value="ECO:0000318"/>
    <property type="project" value="GO_Central"/>
</dbReference>
<dbReference type="GO" id="GO:0005912">
    <property type="term" value="C:adherens junction"/>
    <property type="evidence" value="ECO:0007669"/>
    <property type="project" value="UniProtKB-SubCell"/>
</dbReference>
<dbReference type="GO" id="GO:0005938">
    <property type="term" value="C:cell cortex"/>
    <property type="evidence" value="ECO:0000314"/>
    <property type="project" value="FlyBase"/>
</dbReference>
<dbReference type="GO" id="GO:0005737">
    <property type="term" value="C:cytoplasm"/>
    <property type="evidence" value="ECO:0000318"/>
    <property type="project" value="GO_Central"/>
</dbReference>
<dbReference type="GO" id="GO:0005902">
    <property type="term" value="C:microvillus"/>
    <property type="evidence" value="ECO:0000318"/>
    <property type="project" value="GO_Central"/>
</dbReference>
<dbReference type="GO" id="GO:0016459">
    <property type="term" value="C:myosin complex"/>
    <property type="evidence" value="ECO:0007669"/>
    <property type="project" value="UniProtKB-KW"/>
</dbReference>
<dbReference type="GO" id="GO:0005886">
    <property type="term" value="C:plasma membrane"/>
    <property type="evidence" value="ECO:0000318"/>
    <property type="project" value="GO_Central"/>
</dbReference>
<dbReference type="GO" id="GO:0051015">
    <property type="term" value="F:actin filament binding"/>
    <property type="evidence" value="ECO:0000318"/>
    <property type="project" value="GO_Central"/>
</dbReference>
<dbReference type="GO" id="GO:0005524">
    <property type="term" value="F:ATP binding"/>
    <property type="evidence" value="ECO:0007669"/>
    <property type="project" value="UniProtKB-KW"/>
</dbReference>
<dbReference type="GO" id="GO:0005516">
    <property type="term" value="F:calmodulin binding"/>
    <property type="evidence" value="ECO:0007669"/>
    <property type="project" value="UniProtKB-KW"/>
</dbReference>
<dbReference type="GO" id="GO:0000146">
    <property type="term" value="F:microfilament motor activity"/>
    <property type="evidence" value="ECO:0000314"/>
    <property type="project" value="UniProtKB"/>
</dbReference>
<dbReference type="GO" id="GO:0005546">
    <property type="term" value="F:phosphatidylinositol-4,5-bisphosphate binding"/>
    <property type="evidence" value="ECO:0000314"/>
    <property type="project" value="UniProtKB"/>
</dbReference>
<dbReference type="GO" id="GO:0007015">
    <property type="term" value="P:actin filament organization"/>
    <property type="evidence" value="ECO:0000318"/>
    <property type="project" value="GO_Central"/>
</dbReference>
<dbReference type="GO" id="GO:0030048">
    <property type="term" value="P:actin filament-based movement"/>
    <property type="evidence" value="ECO:0000318"/>
    <property type="project" value="GO_Central"/>
</dbReference>
<dbReference type="GO" id="GO:0071907">
    <property type="term" value="P:determination of digestive tract left/right asymmetry"/>
    <property type="evidence" value="ECO:0000315"/>
    <property type="project" value="FlyBase"/>
</dbReference>
<dbReference type="GO" id="GO:0007368">
    <property type="term" value="P:determination of left/right symmetry"/>
    <property type="evidence" value="ECO:0000315"/>
    <property type="project" value="UniProtKB"/>
</dbReference>
<dbReference type="GO" id="GO:0006897">
    <property type="term" value="P:endocytosis"/>
    <property type="evidence" value="ECO:0000318"/>
    <property type="project" value="GO_Central"/>
</dbReference>
<dbReference type="GO" id="GO:0061525">
    <property type="term" value="P:hindgut development"/>
    <property type="evidence" value="ECO:0000315"/>
    <property type="project" value="FlyBase"/>
</dbReference>
<dbReference type="GO" id="GO:0048803">
    <property type="term" value="P:imaginal disc-derived male genitalia morphogenesis"/>
    <property type="evidence" value="ECO:0000315"/>
    <property type="project" value="FlyBase"/>
</dbReference>
<dbReference type="GO" id="GO:0007498">
    <property type="term" value="P:mesoderm development"/>
    <property type="evidence" value="ECO:0000270"/>
    <property type="project" value="FlyBase"/>
</dbReference>
<dbReference type="CDD" id="cd01378">
    <property type="entry name" value="MYSc_Myo1"/>
    <property type="match status" value="1"/>
</dbReference>
<dbReference type="FunFam" id="1.20.58.530:FF:000004">
    <property type="entry name" value="Unconventional myosin ID"/>
    <property type="match status" value="1"/>
</dbReference>
<dbReference type="Gene3D" id="1.10.10.820">
    <property type="match status" value="1"/>
</dbReference>
<dbReference type="Gene3D" id="1.20.5.4820">
    <property type="match status" value="1"/>
</dbReference>
<dbReference type="Gene3D" id="1.20.58.530">
    <property type="match status" value="1"/>
</dbReference>
<dbReference type="Gene3D" id="3.40.850.10">
    <property type="entry name" value="Kinesin motor domain"/>
    <property type="match status" value="1"/>
</dbReference>
<dbReference type="Gene3D" id="1.20.120.720">
    <property type="entry name" value="Myosin VI head, motor domain, U50 subdomain"/>
    <property type="match status" value="1"/>
</dbReference>
<dbReference type="InterPro" id="IPR000048">
    <property type="entry name" value="IQ_motif_EF-hand-BS"/>
</dbReference>
<dbReference type="InterPro" id="IPR036961">
    <property type="entry name" value="Kinesin_motor_dom_sf"/>
</dbReference>
<dbReference type="InterPro" id="IPR001609">
    <property type="entry name" value="Myosin_head_motor_dom-like"/>
</dbReference>
<dbReference type="InterPro" id="IPR010926">
    <property type="entry name" value="Myosin_TH1"/>
</dbReference>
<dbReference type="InterPro" id="IPR036072">
    <property type="entry name" value="MYSc_Myo1"/>
</dbReference>
<dbReference type="InterPro" id="IPR027417">
    <property type="entry name" value="P-loop_NTPase"/>
</dbReference>
<dbReference type="PANTHER" id="PTHR13140">
    <property type="entry name" value="MYOSIN"/>
    <property type="match status" value="1"/>
</dbReference>
<dbReference type="PANTHER" id="PTHR13140:SF713">
    <property type="entry name" value="UNCONVENTIONAL MYOSIN ID"/>
    <property type="match status" value="1"/>
</dbReference>
<dbReference type="Pfam" id="PF00612">
    <property type="entry name" value="IQ"/>
    <property type="match status" value="1"/>
</dbReference>
<dbReference type="Pfam" id="PF00063">
    <property type="entry name" value="Myosin_head"/>
    <property type="match status" value="1"/>
</dbReference>
<dbReference type="Pfam" id="PF06017">
    <property type="entry name" value="Myosin_TH1"/>
    <property type="match status" value="1"/>
</dbReference>
<dbReference type="PRINTS" id="PR00193">
    <property type="entry name" value="MYOSINHEAVY"/>
</dbReference>
<dbReference type="SMART" id="SM00015">
    <property type="entry name" value="IQ"/>
    <property type="match status" value="2"/>
</dbReference>
<dbReference type="SMART" id="SM00242">
    <property type="entry name" value="MYSc"/>
    <property type="match status" value="1"/>
</dbReference>
<dbReference type="SUPFAM" id="SSF52540">
    <property type="entry name" value="P-loop containing nucleoside triphosphate hydrolases"/>
    <property type="match status" value="1"/>
</dbReference>
<dbReference type="PROSITE" id="PS50096">
    <property type="entry name" value="IQ"/>
    <property type="match status" value="1"/>
</dbReference>
<dbReference type="PROSITE" id="PS51456">
    <property type="entry name" value="MYOSIN_MOTOR"/>
    <property type="match status" value="1"/>
</dbReference>
<dbReference type="PROSITE" id="PS51757">
    <property type="entry name" value="TH1"/>
    <property type="match status" value="1"/>
</dbReference>
<sequence>MAMQREAGVQDFVLLDQVSMEKFMDNLRKRFQNGSIYTYIGEVCVSMNPYRQMNIYGPETIRKYKGRELFENAPHLFAIADSAYRVLKQRQQDTCILISGESGAGKTEASKIIMKYIAAVTNAQGQNEIERVKNVLIQSNAILETFGNAKTNRNDNSSRFGKYMDIEFDYKADPVGGIITNYLLEKSRVVQQQPGERNFHSFYQLLRGANDNELRQYELQKETGKYHYLNQGSMDILTEKSDYKGTCNAFKTLGFSTDEVQTIWRTIAAVLHLGNVEFQTIEDELVISNKQHLKSTAKLLQVTETELSTALTKRVIAAGGNVMQKDHNATQAEYGKDALAKAIYDRLFTWIISRINRAILFRGSKTQARFNSVIGVLDIYGFEIFDSNSFEQFCINYCNEKLQQLFIELVLKQEQEEYQREGIEWTNIEYFNNKIICDLVEQPHKGIIAIMDEACLSVGKVTDDTLLGAMDKNLSKHPHYTSRQLKPTDKELKHREDFRITHYAGDVIYNINGFIEKNKDTLYQDFKRLLHNSKDANLSEMWPEGAQDIKKTTKRPLTAGTLFQRSMADLVVTLLKKEPFYVRCIKPNDLKSSTVFDEERVEHQVRYLGLLENLRVRRAGFVHRQRYDKFLLRYKMISQYTWPNFRAGSDRDGVRVLIEEKKFAQDVKYGHTKIFIRSPRTLFALEHQRNEMIPHIVTLLQKRVRGWIVRRNFKKMKAAITIVRAYKAYKLRSYVQELANRLRKAKQMRDYGKSIQWPQPPLAGRKVEAKLHRMFDFWRANMILHKYPRSEWPQLRLQIIAATALAGRRPYWGQARRWVGDYLANSQENSGYEAYNGSIKNIRNHPADGETFQQVLFSSFVKKFNHFNKQANRAFIVSDSTIHKLDGIKNKFKDMKRTIKIRELTSISVSPGRDQLIVFHSSKNKDLVFSLESEYTPLKEDRIGEVVGIVCKKYHDLTGTELRVNVTTNISCRLDGKARIITVEAASNVEVPNFRPKEGNIIFEVPAAYCV</sequence>
<reference key="1">
    <citation type="journal article" date="1994" name="J. Mol. Biol.">
        <title>The molecular cloning and characterization of Drosophila melanogaster myosin-IA and myosin-IB.</title>
        <authorList>
            <person name="Morgan N.S."/>
            <person name="Skovronsky D.M."/>
            <person name="Artavanis-Tsakonas S."/>
            <person name="Mooseker M.S."/>
        </authorList>
    </citation>
    <scope>NUCLEOTIDE SEQUENCE [MRNA]</scope>
    <scope>DEVELOPMENTAL STAGE</scope>
    <source>
        <tissue>Embryo</tissue>
    </source>
</reference>
<reference key="2">
    <citation type="journal article" date="2000" name="Science">
        <title>The genome sequence of Drosophila melanogaster.</title>
        <authorList>
            <person name="Adams M.D."/>
            <person name="Celniker S.E."/>
            <person name="Holt R.A."/>
            <person name="Evans C.A."/>
            <person name="Gocayne J.D."/>
            <person name="Amanatides P.G."/>
            <person name="Scherer S.E."/>
            <person name="Li P.W."/>
            <person name="Hoskins R.A."/>
            <person name="Galle R.F."/>
            <person name="George R.A."/>
            <person name="Lewis S.E."/>
            <person name="Richards S."/>
            <person name="Ashburner M."/>
            <person name="Henderson S.N."/>
            <person name="Sutton G.G."/>
            <person name="Wortman J.R."/>
            <person name="Yandell M.D."/>
            <person name="Zhang Q."/>
            <person name="Chen L.X."/>
            <person name="Brandon R.C."/>
            <person name="Rogers Y.-H.C."/>
            <person name="Blazej R.G."/>
            <person name="Champe M."/>
            <person name="Pfeiffer B.D."/>
            <person name="Wan K.H."/>
            <person name="Doyle C."/>
            <person name="Baxter E.G."/>
            <person name="Helt G."/>
            <person name="Nelson C.R."/>
            <person name="Miklos G.L.G."/>
            <person name="Abril J.F."/>
            <person name="Agbayani A."/>
            <person name="An H.-J."/>
            <person name="Andrews-Pfannkoch C."/>
            <person name="Baldwin D."/>
            <person name="Ballew R.M."/>
            <person name="Basu A."/>
            <person name="Baxendale J."/>
            <person name="Bayraktaroglu L."/>
            <person name="Beasley E.M."/>
            <person name="Beeson K.Y."/>
            <person name="Benos P.V."/>
            <person name="Berman B.P."/>
            <person name="Bhandari D."/>
            <person name="Bolshakov S."/>
            <person name="Borkova D."/>
            <person name="Botchan M.R."/>
            <person name="Bouck J."/>
            <person name="Brokstein P."/>
            <person name="Brottier P."/>
            <person name="Burtis K.C."/>
            <person name="Busam D.A."/>
            <person name="Butler H."/>
            <person name="Cadieu E."/>
            <person name="Center A."/>
            <person name="Chandra I."/>
            <person name="Cherry J.M."/>
            <person name="Cawley S."/>
            <person name="Dahlke C."/>
            <person name="Davenport L.B."/>
            <person name="Davies P."/>
            <person name="de Pablos B."/>
            <person name="Delcher A."/>
            <person name="Deng Z."/>
            <person name="Mays A.D."/>
            <person name="Dew I."/>
            <person name="Dietz S.M."/>
            <person name="Dodson K."/>
            <person name="Doup L.E."/>
            <person name="Downes M."/>
            <person name="Dugan-Rocha S."/>
            <person name="Dunkov B.C."/>
            <person name="Dunn P."/>
            <person name="Durbin K.J."/>
            <person name="Evangelista C.C."/>
            <person name="Ferraz C."/>
            <person name="Ferriera S."/>
            <person name="Fleischmann W."/>
            <person name="Fosler C."/>
            <person name="Gabrielian A.E."/>
            <person name="Garg N.S."/>
            <person name="Gelbart W.M."/>
            <person name="Glasser K."/>
            <person name="Glodek A."/>
            <person name="Gong F."/>
            <person name="Gorrell J.H."/>
            <person name="Gu Z."/>
            <person name="Guan P."/>
            <person name="Harris M."/>
            <person name="Harris N.L."/>
            <person name="Harvey D.A."/>
            <person name="Heiman T.J."/>
            <person name="Hernandez J.R."/>
            <person name="Houck J."/>
            <person name="Hostin D."/>
            <person name="Houston K.A."/>
            <person name="Howland T.J."/>
            <person name="Wei M.-H."/>
            <person name="Ibegwam C."/>
            <person name="Jalali M."/>
            <person name="Kalush F."/>
            <person name="Karpen G.H."/>
            <person name="Ke Z."/>
            <person name="Kennison J.A."/>
            <person name="Ketchum K.A."/>
            <person name="Kimmel B.E."/>
            <person name="Kodira C.D."/>
            <person name="Kraft C.L."/>
            <person name="Kravitz S."/>
            <person name="Kulp D."/>
            <person name="Lai Z."/>
            <person name="Lasko P."/>
            <person name="Lei Y."/>
            <person name="Levitsky A.A."/>
            <person name="Li J.H."/>
            <person name="Li Z."/>
            <person name="Liang Y."/>
            <person name="Lin X."/>
            <person name="Liu X."/>
            <person name="Mattei B."/>
            <person name="McIntosh T.C."/>
            <person name="McLeod M.P."/>
            <person name="McPherson D."/>
            <person name="Merkulov G."/>
            <person name="Milshina N.V."/>
            <person name="Mobarry C."/>
            <person name="Morris J."/>
            <person name="Moshrefi A."/>
            <person name="Mount S.M."/>
            <person name="Moy M."/>
            <person name="Murphy B."/>
            <person name="Murphy L."/>
            <person name="Muzny D.M."/>
            <person name="Nelson D.L."/>
            <person name="Nelson D.R."/>
            <person name="Nelson K.A."/>
            <person name="Nixon K."/>
            <person name="Nusskern D.R."/>
            <person name="Pacleb J.M."/>
            <person name="Palazzolo M."/>
            <person name="Pittman G.S."/>
            <person name="Pan S."/>
            <person name="Pollard J."/>
            <person name="Puri V."/>
            <person name="Reese M.G."/>
            <person name="Reinert K."/>
            <person name="Remington K."/>
            <person name="Saunders R.D.C."/>
            <person name="Scheeler F."/>
            <person name="Shen H."/>
            <person name="Shue B.C."/>
            <person name="Siden-Kiamos I."/>
            <person name="Simpson M."/>
            <person name="Skupski M.P."/>
            <person name="Smith T.J."/>
            <person name="Spier E."/>
            <person name="Spradling A.C."/>
            <person name="Stapleton M."/>
            <person name="Strong R."/>
            <person name="Sun E."/>
            <person name="Svirskas R."/>
            <person name="Tector C."/>
            <person name="Turner R."/>
            <person name="Venter E."/>
            <person name="Wang A.H."/>
            <person name="Wang X."/>
            <person name="Wang Z.-Y."/>
            <person name="Wassarman D.A."/>
            <person name="Weinstock G.M."/>
            <person name="Weissenbach J."/>
            <person name="Williams S.M."/>
            <person name="Woodage T."/>
            <person name="Worley K.C."/>
            <person name="Wu D."/>
            <person name="Yang S."/>
            <person name="Yao Q.A."/>
            <person name="Ye J."/>
            <person name="Yeh R.-F."/>
            <person name="Zaveri J.S."/>
            <person name="Zhan M."/>
            <person name="Zhang G."/>
            <person name="Zhao Q."/>
            <person name="Zheng L."/>
            <person name="Zheng X.H."/>
            <person name="Zhong F.N."/>
            <person name="Zhong W."/>
            <person name="Zhou X."/>
            <person name="Zhu S.C."/>
            <person name="Zhu X."/>
            <person name="Smith H.O."/>
            <person name="Gibbs R.A."/>
            <person name="Myers E.W."/>
            <person name="Rubin G.M."/>
            <person name="Venter J.C."/>
        </authorList>
    </citation>
    <scope>NUCLEOTIDE SEQUENCE [LARGE SCALE GENOMIC DNA]</scope>
    <source>
        <strain>Berkeley</strain>
    </source>
</reference>
<reference key="3">
    <citation type="journal article" date="2002" name="Genome Biol.">
        <title>Annotation of the Drosophila melanogaster euchromatic genome: a systematic review.</title>
        <authorList>
            <person name="Misra S."/>
            <person name="Crosby M.A."/>
            <person name="Mungall C.J."/>
            <person name="Matthews B.B."/>
            <person name="Campbell K.S."/>
            <person name="Hradecky P."/>
            <person name="Huang Y."/>
            <person name="Kaminker J.S."/>
            <person name="Millburn G.H."/>
            <person name="Prochnik S.E."/>
            <person name="Smith C.D."/>
            <person name="Tupy J.L."/>
            <person name="Whitfield E.J."/>
            <person name="Bayraktaroglu L."/>
            <person name="Berman B.P."/>
            <person name="Bettencourt B.R."/>
            <person name="Celniker S.E."/>
            <person name="de Grey A.D.N.J."/>
            <person name="Drysdale R.A."/>
            <person name="Harris N.L."/>
            <person name="Richter J."/>
            <person name="Russo S."/>
            <person name="Schroeder A.J."/>
            <person name="Shu S.Q."/>
            <person name="Stapleton M."/>
            <person name="Yamada C."/>
            <person name="Ashburner M."/>
            <person name="Gelbart W.M."/>
            <person name="Rubin G.M."/>
            <person name="Lewis S.E."/>
        </authorList>
    </citation>
    <scope>GENOME REANNOTATION</scope>
    <source>
        <strain>Berkeley</strain>
    </source>
</reference>
<reference key="4">
    <citation type="journal article" date="2002" name="Genome Biol.">
        <title>A Drosophila full-length cDNA resource.</title>
        <authorList>
            <person name="Stapleton M."/>
            <person name="Carlson J.W."/>
            <person name="Brokstein P."/>
            <person name="Yu C."/>
            <person name="Champe M."/>
            <person name="George R.A."/>
            <person name="Guarin H."/>
            <person name="Kronmiller B."/>
            <person name="Pacleb J.M."/>
            <person name="Park S."/>
            <person name="Wan K.H."/>
            <person name="Rubin G.M."/>
            <person name="Celniker S.E."/>
        </authorList>
    </citation>
    <scope>NUCLEOTIDE SEQUENCE [LARGE SCALE MRNA]</scope>
    <source>
        <strain>Berkeley</strain>
        <tissue>Embryo</tissue>
    </source>
</reference>
<reference key="5">
    <citation type="journal article" date="1995" name="Dev. Biol.">
        <title>Characterization of myosin-IA and myosin-IB, two unconventional myosins associated with the Drosophila brush border cytoskeleton.</title>
        <authorList>
            <person name="Morgan N.S."/>
            <person name="Heintzelman M.B."/>
            <person name="Mooseker M.S."/>
        </authorList>
    </citation>
    <scope>ACTIN-BINDING</scope>
    <scope>SUBCELLULAR LOCATION</scope>
    <scope>TISSUE SPECIFICITY</scope>
    <scope>DEVELOPMENTAL STAGE</scope>
</reference>
<reference key="6">
    <citation type="journal article" date="2006" name="Nature">
        <title>An unconventional myosin in Drosophila reverses the default handedness in visceral organs.</title>
        <authorList>
            <person name="Hozumi S."/>
            <person name="Maeda R."/>
            <person name="Taniguchi K."/>
            <person name="Kanai M."/>
            <person name="Shirakabe S."/>
            <person name="Sasamura T."/>
            <person name="Speder P."/>
            <person name="Noselli S."/>
            <person name="Aigaki T."/>
            <person name="Murakami R."/>
            <person name="Matsuno K."/>
        </authorList>
    </citation>
    <scope>FUNCTION</scope>
    <scope>DISRUPTION PHENOTYPE</scope>
    <scope>SUBCELLULAR LOCATION</scope>
    <scope>DEVELOPMENTAL STAGE</scope>
    <scope>MUTAGENESIS OF 331-GLN--VAL-1011</scope>
</reference>
<reference key="7">
    <citation type="journal article" date="2006" name="Nature">
        <title>Type ID unconventional myosin controls left-right asymmetry in Drosophila.</title>
        <authorList>
            <person name="Speder P."/>
            <person name="Adam G."/>
            <person name="Noselli S."/>
        </authorList>
    </citation>
    <scope>FUNCTION</scope>
    <scope>DISRUPTION PHENOTYPE</scope>
    <scope>DEVELOPMENTAL STAGE</scope>
    <scope>INTERACTION WITH ARM</scope>
    <scope>SUBCELLULAR LOCATION</scope>
    <scope>DOMAIN</scope>
    <scope>MUTAGENESIS OF 695-HIS--GLN-736</scope>
</reference>
<reference key="8">
    <citation type="journal article" date="2008" name="Dev. Dyn.">
        <title>Head region of unconventional myosin I family members is responsible for the organ-specificity of their roles in left-right polarity in Drosophila.</title>
        <authorList>
            <person name="Hozumi S."/>
            <person name="Maeda R."/>
            <person name="Taniguchi-Kanai M."/>
            <person name="Okumura T."/>
            <person name="Taniguchi K."/>
            <person name="Kawakatsu Y."/>
            <person name="Nakazawa N."/>
            <person name="Hatori R."/>
            <person name="Matsuno K."/>
        </authorList>
    </citation>
    <scope>FUNCTION</scope>
    <scope>DISRUPTION PHENOTYPE</scope>
    <scope>DOMAIN</scope>
    <scope>MUTAGENESIS OF 103-GLY--THR-107; LYS-106; ASN-156; PHE-382; 579-PRO--ASP-589; 692-MET--GLU-737 AND 738-LEU--VAL-1011</scope>
</reference>
<reference key="9">
    <citation type="journal article" date="2012" name="Development">
        <title>DE-Cadherin regulates unconventional Myosin ID and Myosin IC in Drosophila left-right asymmetry establishment.</title>
        <authorList>
            <person name="Petzoldt A.G."/>
            <person name="Coutelis J.B."/>
            <person name="Geminard C."/>
            <person name="Speder P."/>
            <person name="Suzanne M."/>
            <person name="Cerezo D."/>
            <person name="Noselli S."/>
        </authorList>
    </citation>
    <scope>FUNCTION</scope>
    <scope>SUBCELLULAR LOCATION</scope>
    <scope>INTERACTION WITH SHG AND ARM</scope>
    <scope>DEVELOPMENTAL STAGE</scope>
</reference>
<reference key="10">
    <citation type="journal article" date="2015" name="Dev. Cell">
        <title>The Atypical Cadherin Dachsous Controls Left-Right Asymmetry in Drosophila.</title>
        <authorList>
            <person name="Gonzalez-Morales N."/>
            <person name="Geminard C."/>
            <person name="Lebreton G."/>
            <person name="Cerezo D."/>
            <person name="Coutelis J.B."/>
            <person name="Noselli S."/>
        </authorList>
    </citation>
    <scope>FUNCTION</scope>
    <scope>DISRUPTION PHENOTYPE</scope>
    <scope>SUBCELLULAR LOCATION</scope>
    <scope>INTERACTION WITH DS</scope>
    <scope>DEVELOPMENTAL STAGE</scope>
</reference>
<reference key="11">
    <citation type="journal article" date="2015" name="Genetics">
        <title>Class I myosins have overlapping and specialized functions in left-right asymmetric development in Drosophila.</title>
        <authorList>
            <person name="Okumura T."/>
            <person name="Sasamura T."/>
            <person name="Inatomi M."/>
            <person name="Hozumi S."/>
            <person name="Nakamura M."/>
            <person name="Hatori R."/>
            <person name="Taniguchi K."/>
            <person name="Nakazawa N."/>
            <person name="Suzuki E."/>
            <person name="Maeda R."/>
            <person name="Yamakawa T."/>
            <person name="Matsuno K."/>
        </authorList>
    </citation>
    <scope>FUNCTION</scope>
    <scope>SUBCELLULAR LOCATION</scope>
    <scope>DEVELOPMENTAL STAGE</scope>
    <scope>MUTAGENESIS OF 331-GLN--VAL-1011</scope>
</reference>
<reference key="12">
    <citation type="journal article" date="2018" name="Science">
        <title>Molecular to organismal chirality is induced by the conserved myosin 1D.</title>
        <authorList>
            <person name="Lebreton G."/>
            <person name="Geminard C."/>
            <person name="Lapraz F."/>
            <person name="Pyrpassopoulos S."/>
            <person name="Cerezo D."/>
            <person name="Speder P."/>
            <person name="Ostap E.M."/>
            <person name="Noselli S."/>
        </authorList>
    </citation>
    <scope>FUNCTION</scope>
    <scope>LIPID-BINDING</scope>
    <scope>DOMAIN</scope>
    <scope>SUBCELLULAR LOCATION</scope>
</reference>
<organism>
    <name type="scientific">Drosophila melanogaster</name>
    <name type="common">Fruit fly</name>
    <dbReference type="NCBI Taxonomy" id="7227"/>
    <lineage>
        <taxon>Eukaryota</taxon>
        <taxon>Metazoa</taxon>
        <taxon>Ecdysozoa</taxon>
        <taxon>Arthropoda</taxon>
        <taxon>Hexapoda</taxon>
        <taxon>Insecta</taxon>
        <taxon>Pterygota</taxon>
        <taxon>Neoptera</taxon>
        <taxon>Endopterygota</taxon>
        <taxon>Diptera</taxon>
        <taxon>Brachycera</taxon>
        <taxon>Muscomorpha</taxon>
        <taxon>Ephydroidea</taxon>
        <taxon>Drosophilidae</taxon>
        <taxon>Drosophila</taxon>
        <taxon>Sophophora</taxon>
    </lineage>
</organism>
<feature type="chain" id="PRO_0000123454" description="Unconventional myosin ID">
    <location>
        <begin position="1"/>
        <end position="1011"/>
    </location>
</feature>
<feature type="domain" description="Myosin motor" evidence="2">
    <location>
        <begin position="7"/>
        <end position="690"/>
    </location>
</feature>
<feature type="domain" description="IQ 1" evidence="1">
    <location>
        <begin position="694"/>
        <end position="714"/>
    </location>
</feature>
<feature type="domain" description="IQ 2" evidence="1">
    <location>
        <begin position="716"/>
        <end position="736"/>
    </location>
</feature>
<feature type="domain" description="TH1" evidence="3">
    <location>
        <begin position="806"/>
        <end position="1007"/>
    </location>
</feature>
<feature type="region of interest" description="Actin-binding" evidence="2">
    <location>
        <begin position="567"/>
        <end position="589"/>
    </location>
</feature>
<feature type="binding site" evidence="2">
    <location>
        <begin position="100"/>
        <end position="107"/>
    </location>
    <ligand>
        <name>ATP</name>
        <dbReference type="ChEBI" id="CHEBI:30616"/>
    </ligand>
</feature>
<feature type="mutagenesis site" description="Loss of function in specification of gut left-right asymmetry." evidence="6">
    <location>
        <begin position="103"/>
        <end position="107"/>
    </location>
</feature>
<feature type="mutagenesis site" description="Loss of function in specification of gut left-right asymmetry; when associated with A-155 and A-382." evidence="6">
    <original>K</original>
    <variation>A</variation>
    <location>
        <position position="106"/>
    </location>
</feature>
<feature type="mutagenesis site" description="Loss of function in specification of gut left-right asymmetry; when associated with A-106 and A-382." evidence="6">
    <original>N</original>
    <variation>A</variation>
    <location>
        <position position="156"/>
    </location>
</feature>
<feature type="mutagenesis site" description="Causes inverted left-right asymmetry of the midgut and hindgut in embryos and adults. Flies are viable and fertile, but display mildly reduced hatching rate and reduced life span." evidence="4 9">
    <location>
        <begin position="331"/>
        <end position="1011"/>
    </location>
</feature>
<feature type="mutagenesis site" description="Loss of function in specification of gut left-right asymmetry; when associated with A-106 and A-156." evidence="6">
    <original>F</original>
    <variation>A</variation>
    <location>
        <position position="382"/>
    </location>
</feature>
<feature type="mutagenesis site" description="Loss of function in specification of gut left-right asymmetry." evidence="6">
    <location>
        <begin position="579"/>
        <end position="589"/>
    </location>
</feature>
<feature type="mutagenesis site" description="Loss of function in specification of gut left-right asymmetry." evidence="6">
    <location>
        <begin position="692"/>
        <end position="737"/>
    </location>
</feature>
<feature type="mutagenesis site" description="Loss of the ability to promote the normal dextral looping of the spermiduct." evidence="5">
    <location>
        <begin position="695"/>
        <end position="736"/>
    </location>
</feature>
<feature type="mutagenesis site" description="Loss of function in specification of gut left-right asymmetry." evidence="6">
    <location>
        <begin position="738"/>
        <end position="1011"/>
    </location>
</feature>
<accession>Q23978</accession>
<accession>A4V0K5</accession>
<accession>M9MRS7</accession>
<proteinExistence type="evidence at protein level"/>
<keyword id="KW-0009">Actin-binding</keyword>
<keyword id="KW-0067">ATP-binding</keyword>
<keyword id="KW-0112">Calmodulin-binding</keyword>
<keyword id="KW-0965">Cell junction</keyword>
<keyword id="KW-1003">Cell membrane</keyword>
<keyword id="KW-0966">Cell projection</keyword>
<keyword id="KW-0963">Cytoplasm</keyword>
<keyword id="KW-0206">Cytoskeleton</keyword>
<keyword id="KW-0217">Developmental protein</keyword>
<keyword id="KW-0446">Lipid-binding</keyword>
<keyword id="KW-0472">Membrane</keyword>
<keyword id="KW-0505">Motor protein</keyword>
<keyword id="KW-0518">Myosin</keyword>
<keyword id="KW-0547">Nucleotide-binding</keyword>
<keyword id="KW-1185">Reference proteome</keyword>
<keyword id="KW-0677">Repeat</keyword>
<protein>
    <recommendedName>
        <fullName evidence="14 15">Unconventional myosin ID</fullName>
        <shortName evidence="15">MyoID</shortName>
    </recommendedName>
    <alternativeName>
        <fullName>Brush border myosin IA</fullName>
        <shortName>BBMIA</shortName>
    </alternativeName>
    <alternativeName>
        <fullName evidence="16">Myosin 1D</fullName>
        <shortName evidence="16">Myo1D</shortName>
    </alternativeName>
    <alternativeName>
        <fullName evidence="14 18">Myosin-IA</fullName>
        <shortName evidence="17">MIA</shortName>
        <shortName evidence="13">MyoIA</shortName>
    </alternativeName>
</protein>